<name>PLSX_NITMU</name>
<sequence>MTITVAVDCMGGDHGPHVTVPATVSYLQSNPAIDVVLVGLPDVIESELRALGYTQSPRLRIHAASEVVGMDESPATALRGKKNSSMRVALNLVKSGEAQACVSAGNTGALLATSRFVLKTLPGIDRPALAVVLPTMRGHTYVLDLGANVDCTAEHLLQFGVMGATLVSSIENKEKPSIGLLNIGEEEIKGNDVVKRAAELLRDSGLNFYGNIEGNDIYKGTTDVVVCDGFVGNVALKTSEGVAQMLSHYLREEFRRNLLTKLAGLIALPVISAFKRRVDHRRYNGASLLGLRGIVIKSHGSADRRAFGFAIARAVDEVRGGMLRHISERVAQLSHQSMQSSSYRRSLPEESPV</sequence>
<organism>
    <name type="scientific">Nitrosospira multiformis (strain ATCC 25196 / NCIMB 11849 / C 71)</name>
    <dbReference type="NCBI Taxonomy" id="323848"/>
    <lineage>
        <taxon>Bacteria</taxon>
        <taxon>Pseudomonadati</taxon>
        <taxon>Pseudomonadota</taxon>
        <taxon>Betaproteobacteria</taxon>
        <taxon>Nitrosomonadales</taxon>
        <taxon>Nitrosomonadaceae</taxon>
        <taxon>Nitrosospira</taxon>
    </lineage>
</organism>
<accession>Q2YA47</accession>
<feature type="chain" id="PRO_1000001793" description="Phosphate acyltransferase">
    <location>
        <begin position="1"/>
        <end position="353"/>
    </location>
</feature>
<comment type="function">
    <text evidence="1">Catalyzes the reversible formation of acyl-phosphate (acyl-PO(4)) from acyl-[acyl-carrier-protein] (acyl-ACP). This enzyme utilizes acyl-ACP as fatty acyl donor, but not acyl-CoA.</text>
</comment>
<comment type="catalytic activity">
    <reaction evidence="1">
        <text>a fatty acyl-[ACP] + phosphate = an acyl phosphate + holo-[ACP]</text>
        <dbReference type="Rhea" id="RHEA:42292"/>
        <dbReference type="Rhea" id="RHEA-COMP:9685"/>
        <dbReference type="Rhea" id="RHEA-COMP:14125"/>
        <dbReference type="ChEBI" id="CHEBI:43474"/>
        <dbReference type="ChEBI" id="CHEBI:59918"/>
        <dbReference type="ChEBI" id="CHEBI:64479"/>
        <dbReference type="ChEBI" id="CHEBI:138651"/>
        <dbReference type="EC" id="2.3.1.274"/>
    </reaction>
</comment>
<comment type="pathway">
    <text evidence="1">Lipid metabolism; phospholipid metabolism.</text>
</comment>
<comment type="subunit">
    <text evidence="1">Homodimer. Probably interacts with PlsY.</text>
</comment>
<comment type="subcellular location">
    <subcellularLocation>
        <location evidence="1">Cytoplasm</location>
    </subcellularLocation>
    <text evidence="1">Associated with the membrane possibly through PlsY.</text>
</comment>
<comment type="similarity">
    <text evidence="1">Belongs to the PlsX family.</text>
</comment>
<gene>
    <name evidence="1" type="primary">plsX</name>
    <name type="ordered locus">Nmul_A1071</name>
</gene>
<evidence type="ECO:0000255" key="1">
    <source>
        <dbReference type="HAMAP-Rule" id="MF_00019"/>
    </source>
</evidence>
<proteinExistence type="inferred from homology"/>
<keyword id="KW-0963">Cytoplasm</keyword>
<keyword id="KW-0444">Lipid biosynthesis</keyword>
<keyword id="KW-0443">Lipid metabolism</keyword>
<keyword id="KW-0594">Phospholipid biosynthesis</keyword>
<keyword id="KW-1208">Phospholipid metabolism</keyword>
<keyword id="KW-1185">Reference proteome</keyword>
<keyword id="KW-0808">Transferase</keyword>
<protein>
    <recommendedName>
        <fullName evidence="1">Phosphate acyltransferase</fullName>
        <ecNumber evidence="1">2.3.1.274</ecNumber>
    </recommendedName>
    <alternativeName>
        <fullName evidence="1">Acyl-ACP phosphotransacylase</fullName>
    </alternativeName>
    <alternativeName>
        <fullName evidence="1">Acyl-[acyl-carrier-protein]--phosphate acyltransferase</fullName>
    </alternativeName>
    <alternativeName>
        <fullName evidence="1">Phosphate-acyl-ACP acyltransferase</fullName>
    </alternativeName>
</protein>
<dbReference type="EC" id="2.3.1.274" evidence="1"/>
<dbReference type="EMBL" id="CP000103">
    <property type="protein sequence ID" value="ABB74374.1"/>
    <property type="molecule type" value="Genomic_DNA"/>
</dbReference>
<dbReference type="RefSeq" id="WP_011380419.1">
    <property type="nucleotide sequence ID" value="NC_007614.1"/>
</dbReference>
<dbReference type="SMR" id="Q2YA47"/>
<dbReference type="STRING" id="323848.Nmul_A1071"/>
<dbReference type="KEGG" id="nmu:Nmul_A1071"/>
<dbReference type="eggNOG" id="COG0416">
    <property type="taxonomic scope" value="Bacteria"/>
</dbReference>
<dbReference type="HOGENOM" id="CLU_039379_1_0_4"/>
<dbReference type="OrthoDB" id="9806408at2"/>
<dbReference type="UniPathway" id="UPA00085"/>
<dbReference type="Proteomes" id="UP000002718">
    <property type="component" value="Chromosome"/>
</dbReference>
<dbReference type="GO" id="GO:0005737">
    <property type="term" value="C:cytoplasm"/>
    <property type="evidence" value="ECO:0007669"/>
    <property type="project" value="UniProtKB-SubCell"/>
</dbReference>
<dbReference type="GO" id="GO:0043811">
    <property type="term" value="F:phosphate:acyl-[acyl carrier protein] acyltransferase activity"/>
    <property type="evidence" value="ECO:0007669"/>
    <property type="project" value="UniProtKB-UniRule"/>
</dbReference>
<dbReference type="GO" id="GO:0006633">
    <property type="term" value="P:fatty acid biosynthetic process"/>
    <property type="evidence" value="ECO:0007669"/>
    <property type="project" value="UniProtKB-UniRule"/>
</dbReference>
<dbReference type="GO" id="GO:0008654">
    <property type="term" value="P:phospholipid biosynthetic process"/>
    <property type="evidence" value="ECO:0007669"/>
    <property type="project" value="UniProtKB-KW"/>
</dbReference>
<dbReference type="Gene3D" id="3.40.718.10">
    <property type="entry name" value="Isopropylmalate Dehydrogenase"/>
    <property type="match status" value="1"/>
</dbReference>
<dbReference type="HAMAP" id="MF_00019">
    <property type="entry name" value="PlsX"/>
    <property type="match status" value="1"/>
</dbReference>
<dbReference type="InterPro" id="IPR003664">
    <property type="entry name" value="FA_synthesis"/>
</dbReference>
<dbReference type="InterPro" id="IPR012281">
    <property type="entry name" value="Phospholipid_synth_PlsX-like"/>
</dbReference>
<dbReference type="NCBIfam" id="TIGR00182">
    <property type="entry name" value="plsX"/>
    <property type="match status" value="1"/>
</dbReference>
<dbReference type="PANTHER" id="PTHR30100">
    <property type="entry name" value="FATTY ACID/PHOSPHOLIPID SYNTHESIS PROTEIN PLSX"/>
    <property type="match status" value="1"/>
</dbReference>
<dbReference type="PANTHER" id="PTHR30100:SF1">
    <property type="entry name" value="PHOSPHATE ACYLTRANSFERASE"/>
    <property type="match status" value="1"/>
</dbReference>
<dbReference type="Pfam" id="PF02504">
    <property type="entry name" value="FA_synthesis"/>
    <property type="match status" value="1"/>
</dbReference>
<dbReference type="PIRSF" id="PIRSF002465">
    <property type="entry name" value="Phsphlp_syn_PlsX"/>
    <property type="match status" value="1"/>
</dbReference>
<dbReference type="SUPFAM" id="SSF53659">
    <property type="entry name" value="Isocitrate/Isopropylmalate dehydrogenase-like"/>
    <property type="match status" value="1"/>
</dbReference>
<reference key="1">
    <citation type="submission" date="2005-08" db="EMBL/GenBank/DDBJ databases">
        <title>Complete sequence of chromosome 1 of Nitrosospira multiformis ATCC 25196.</title>
        <authorList>
            <person name="Copeland A."/>
            <person name="Lucas S."/>
            <person name="Lapidus A."/>
            <person name="Barry K."/>
            <person name="Detter J.C."/>
            <person name="Glavina T."/>
            <person name="Hammon N."/>
            <person name="Israni S."/>
            <person name="Pitluck S."/>
            <person name="Chain P."/>
            <person name="Malfatti S."/>
            <person name="Shin M."/>
            <person name="Vergez L."/>
            <person name="Schmutz J."/>
            <person name="Larimer F."/>
            <person name="Land M."/>
            <person name="Hauser L."/>
            <person name="Kyrpides N."/>
            <person name="Lykidis A."/>
            <person name="Richardson P."/>
        </authorList>
    </citation>
    <scope>NUCLEOTIDE SEQUENCE [LARGE SCALE GENOMIC DNA]</scope>
    <source>
        <strain>ATCC 25196 / NCIMB 11849 / C 71</strain>
    </source>
</reference>